<comment type="function">
    <text>Covalent carrier of the coenzyme of citrate lyase.</text>
</comment>
<comment type="subunit">
    <text evidence="1">Oligomer with a subunit composition of (alpha,beta,gamma)6.</text>
</comment>
<comment type="subcellular location">
    <subcellularLocation>
        <location>Cytoplasm</location>
    </subcellularLocation>
</comment>
<comment type="similarity">
    <text evidence="2">Belongs to the CitD family.</text>
</comment>
<protein>
    <recommendedName>
        <fullName>Citrate lyase acyl carrier protein</fullName>
    </recommendedName>
    <alternativeName>
        <fullName>Citrate lyase gamma chain</fullName>
    </alternativeName>
</protein>
<gene>
    <name type="primary">citD</name>
</gene>
<accession>O53077</accession>
<proteinExistence type="inferred from homology"/>
<keyword id="KW-0963">Cytoplasm</keyword>
<keyword id="KW-0597">Phosphoprotein</keyword>
<name>CITD_LEUMC</name>
<feature type="chain" id="PRO_0000214704" description="Citrate lyase acyl carrier protein">
    <location>
        <begin position="1"/>
        <end position="97"/>
    </location>
</feature>
<feature type="modified residue" description="O-(phosphoribosyl dephospho-coenzyme A)serine" evidence="1">
    <location>
        <position position="14"/>
    </location>
</feature>
<dbReference type="EMBL" id="Y10621">
    <property type="protein sequence ID" value="CAA71635.1"/>
    <property type="molecule type" value="Genomic_DNA"/>
</dbReference>
<dbReference type="RefSeq" id="WP_050892382.1">
    <property type="nucleotide sequence ID" value="NZ_LAYV01000030.1"/>
</dbReference>
<dbReference type="SMR" id="O53077"/>
<dbReference type="PATRIC" id="fig|33965.3.peg.1362"/>
<dbReference type="GO" id="GO:0005737">
    <property type="term" value="C:cytoplasm"/>
    <property type="evidence" value="ECO:0007669"/>
    <property type="project" value="UniProtKB-SubCell"/>
</dbReference>
<dbReference type="HAMAP" id="MF_00805">
    <property type="entry name" value="CitD"/>
    <property type="match status" value="1"/>
</dbReference>
<dbReference type="InterPro" id="IPR006495">
    <property type="entry name" value="CitD"/>
</dbReference>
<dbReference type="InterPro" id="IPR023439">
    <property type="entry name" value="Mal_deCO2ase/Cit_lyase_ACP"/>
</dbReference>
<dbReference type="NCBIfam" id="TIGR01608">
    <property type="entry name" value="citD"/>
    <property type="match status" value="1"/>
</dbReference>
<dbReference type="NCBIfam" id="NF009726">
    <property type="entry name" value="PRK13253.1"/>
    <property type="match status" value="1"/>
</dbReference>
<dbReference type="Pfam" id="PF06857">
    <property type="entry name" value="ACP"/>
    <property type="match status" value="1"/>
</dbReference>
<dbReference type="PIRSF" id="PIRSF002736">
    <property type="entry name" value="Citrt_lyas_gamma"/>
    <property type="match status" value="1"/>
</dbReference>
<evidence type="ECO:0000250" key="1"/>
<evidence type="ECO:0000305" key="2"/>
<reference key="1">
    <citation type="journal article" date="1998" name="J. Bacteriol.">
        <title>Purification of Leuconostoc mesenteroides citrate lyase and cloning and characterization of the citCDEFG gene cluster.</title>
        <authorList>
            <person name="Bekal S."/>
            <person name="van Beeumen J."/>
            <person name="Samyn B."/>
            <person name="Garmyn D."/>
            <person name="Henini S."/>
            <person name="Divies C."/>
            <person name="Prevost H."/>
        </authorList>
    </citation>
    <scope>NUCLEOTIDE SEQUENCE [GENOMIC DNA]</scope>
    <source>
        <strain>195</strain>
    </source>
</reference>
<organism>
    <name type="scientific">Leuconostoc mesenteroides subsp. cremoris</name>
    <dbReference type="NCBI Taxonomy" id="33965"/>
    <lineage>
        <taxon>Bacteria</taxon>
        <taxon>Bacillati</taxon>
        <taxon>Bacillota</taxon>
        <taxon>Bacilli</taxon>
        <taxon>Lactobacillales</taxon>
        <taxon>Lactobacillaceae</taxon>
        <taxon>Leuconostoc</taxon>
    </lineage>
</organism>
<sequence length="97" mass="10479">MEIKKTAIAGTLESSDVQIMLSKGTVGVEFDLVSDVAKQFADDIKSTIKETLGLYGIENAVVKVVDKGALDMVIKARTLTAIQRALDAVDQPNWEVL</sequence>